<dbReference type="EMBL" id="AF008210">
    <property type="protein sequence ID" value="AAC38113.1"/>
    <property type="molecule type" value="Genomic_DNA"/>
</dbReference>
<dbReference type="EMBL" id="AE013218">
    <property type="protein sequence ID" value="AAM67577.1"/>
    <property type="molecule type" value="Genomic_DNA"/>
</dbReference>
<dbReference type="RefSeq" id="WP_011053543.1">
    <property type="nucleotide sequence ID" value="NC_004061.1"/>
</dbReference>
<dbReference type="SMR" id="O51875"/>
<dbReference type="STRING" id="198804.BUsg_005"/>
<dbReference type="GeneID" id="93003467"/>
<dbReference type="KEGG" id="bas:BUsg_005"/>
<dbReference type="eggNOG" id="COG0712">
    <property type="taxonomic scope" value="Bacteria"/>
</dbReference>
<dbReference type="HOGENOM" id="CLU_085114_3_0_6"/>
<dbReference type="Proteomes" id="UP000000416">
    <property type="component" value="Chromosome"/>
</dbReference>
<dbReference type="GO" id="GO:0005886">
    <property type="term" value="C:plasma membrane"/>
    <property type="evidence" value="ECO:0007669"/>
    <property type="project" value="UniProtKB-SubCell"/>
</dbReference>
<dbReference type="GO" id="GO:0045259">
    <property type="term" value="C:proton-transporting ATP synthase complex"/>
    <property type="evidence" value="ECO:0007669"/>
    <property type="project" value="UniProtKB-KW"/>
</dbReference>
<dbReference type="GO" id="GO:0046933">
    <property type="term" value="F:proton-transporting ATP synthase activity, rotational mechanism"/>
    <property type="evidence" value="ECO:0007669"/>
    <property type="project" value="UniProtKB-UniRule"/>
</dbReference>
<dbReference type="Gene3D" id="1.10.520.20">
    <property type="entry name" value="N-terminal domain of the delta subunit of the F1F0-ATP synthase"/>
    <property type="match status" value="1"/>
</dbReference>
<dbReference type="HAMAP" id="MF_01416">
    <property type="entry name" value="ATP_synth_delta_bact"/>
    <property type="match status" value="1"/>
</dbReference>
<dbReference type="InterPro" id="IPR026015">
    <property type="entry name" value="ATP_synth_OSCP/delta_N_sf"/>
</dbReference>
<dbReference type="InterPro" id="IPR000711">
    <property type="entry name" value="ATPase_OSCP/dsu"/>
</dbReference>
<dbReference type="NCBIfam" id="TIGR01145">
    <property type="entry name" value="ATP_synt_delta"/>
    <property type="match status" value="1"/>
</dbReference>
<dbReference type="NCBIfam" id="NF004402">
    <property type="entry name" value="PRK05758.2-2"/>
    <property type="match status" value="1"/>
</dbReference>
<dbReference type="PANTHER" id="PTHR11910">
    <property type="entry name" value="ATP SYNTHASE DELTA CHAIN"/>
    <property type="match status" value="1"/>
</dbReference>
<dbReference type="Pfam" id="PF00213">
    <property type="entry name" value="OSCP"/>
    <property type="match status" value="1"/>
</dbReference>
<dbReference type="PRINTS" id="PR00125">
    <property type="entry name" value="ATPASEDELTA"/>
</dbReference>
<dbReference type="SUPFAM" id="SSF47928">
    <property type="entry name" value="N-terminal domain of the delta subunit of the F1F0-ATP synthase"/>
    <property type="match status" value="1"/>
</dbReference>
<feature type="chain" id="PRO_0000193460" description="ATP synthase subunit delta">
    <location>
        <begin position="1"/>
        <end position="177"/>
    </location>
</feature>
<comment type="function">
    <text evidence="1">F(1)F(0) ATP synthase produces ATP from ADP in the presence of a proton or sodium gradient. F-type ATPases consist of two structural domains, F(1) containing the extramembraneous catalytic core and F(0) containing the membrane proton channel, linked together by a central stalk and a peripheral stalk. During catalysis, ATP synthesis in the catalytic domain of F(1) is coupled via a rotary mechanism of the central stalk subunits to proton translocation.</text>
</comment>
<comment type="function">
    <text evidence="1">This protein is part of the stalk that links CF(0) to CF(1). It either transmits conformational changes from CF(0) to CF(1) or is implicated in proton conduction.</text>
</comment>
<comment type="subunit">
    <text evidence="1">F-type ATPases have 2 components, F(1) - the catalytic core - and F(0) - the membrane proton channel. F(1) has five subunits: alpha(3), beta(3), gamma(1), delta(1), epsilon(1). F(0) has three main subunits: a(1), b(2) and c(10-14). The alpha and beta chains form an alternating ring which encloses part of the gamma chain. F(1) is attached to F(0) by a central stalk formed by the gamma and epsilon chains, while a peripheral stalk is formed by the delta and b chains.</text>
</comment>
<comment type="subcellular location">
    <subcellularLocation>
        <location evidence="1">Cell membrane</location>
        <topology evidence="1">Peripheral membrane protein</topology>
    </subcellularLocation>
</comment>
<comment type="similarity">
    <text evidence="1">Belongs to the ATPase delta chain family.</text>
</comment>
<keyword id="KW-0066">ATP synthesis</keyword>
<keyword id="KW-1003">Cell membrane</keyword>
<keyword id="KW-0139">CF(1)</keyword>
<keyword id="KW-0375">Hydrogen ion transport</keyword>
<keyword id="KW-0406">Ion transport</keyword>
<keyword id="KW-0472">Membrane</keyword>
<keyword id="KW-0813">Transport</keyword>
<accession>O51875</accession>
<gene>
    <name evidence="1" type="primary">atpH</name>
    <name type="ordered locus">BUsg_005</name>
</gene>
<sequence length="177" mass="20671">MSVLDTIARPYAKAIFELAIENQSIEKWKKTLIFINEIIRSKKIEKFLSGSLSPSYLSSFFIFVAGDHIDKDARNLIKLLAENQRFKIFNNILRQFLKLETSYQGNTIIELISAYSLQEHEIIDIRCILQKIFLSKIKFIYKIDHQILDGIIIKKADTVFDFSVRSYLKQLSDVLNF</sequence>
<reference key="1">
    <citation type="journal article" date="1997" name="Curr. Microbiol.">
        <title>The (F1F0) ATP synthase of Buchnera aphidicola (endosymbiont of aphids): genetic analysis of the putative ATP operon.</title>
        <authorList>
            <person name="Clark M.A."/>
            <person name="Baumann P."/>
        </authorList>
    </citation>
    <scope>NUCLEOTIDE SEQUENCE [GENOMIC DNA]</scope>
</reference>
<reference key="2">
    <citation type="journal article" date="1998" name="Curr. Microbiol.">
        <title>Sequence analysis of a 34.7-kb DNA segment from the genome of Buchnera aphidicola (endosymbiont of aphids) containing groEL, dnaA, the atp operon, gidA, and rho.</title>
        <authorList>
            <person name="Clark M.A."/>
            <person name="Baumann L."/>
            <person name="Baumann P."/>
        </authorList>
    </citation>
    <scope>NUCLEOTIDE SEQUENCE [GENOMIC DNA]</scope>
</reference>
<reference key="3">
    <citation type="journal article" date="2002" name="Science">
        <title>50 million years of genomic stasis in endosymbiotic bacteria.</title>
        <authorList>
            <person name="Tamas I."/>
            <person name="Klasson L."/>
            <person name="Canbaeck B."/>
            <person name="Naeslund A.K."/>
            <person name="Eriksson A.-S."/>
            <person name="Wernegreen J.J."/>
            <person name="Sandstroem J.P."/>
            <person name="Moran N.A."/>
            <person name="Andersson S.G.E."/>
        </authorList>
    </citation>
    <scope>NUCLEOTIDE SEQUENCE [LARGE SCALE GENOMIC DNA]</scope>
    <source>
        <strain>Sg</strain>
    </source>
</reference>
<evidence type="ECO:0000255" key="1">
    <source>
        <dbReference type="HAMAP-Rule" id="MF_01416"/>
    </source>
</evidence>
<name>ATPD_BUCAP</name>
<proteinExistence type="inferred from homology"/>
<protein>
    <recommendedName>
        <fullName evidence="1">ATP synthase subunit delta</fullName>
    </recommendedName>
    <alternativeName>
        <fullName evidence="1">ATP synthase F(1) sector subunit delta</fullName>
    </alternativeName>
    <alternativeName>
        <fullName evidence="1">F-type ATPase subunit delta</fullName>
        <shortName evidence="1">F-ATPase subunit delta</shortName>
    </alternativeName>
</protein>
<organism>
    <name type="scientific">Buchnera aphidicola subsp. Schizaphis graminum (strain Sg)</name>
    <dbReference type="NCBI Taxonomy" id="198804"/>
    <lineage>
        <taxon>Bacteria</taxon>
        <taxon>Pseudomonadati</taxon>
        <taxon>Pseudomonadota</taxon>
        <taxon>Gammaproteobacteria</taxon>
        <taxon>Enterobacterales</taxon>
        <taxon>Erwiniaceae</taxon>
        <taxon>Buchnera</taxon>
    </lineage>
</organism>